<proteinExistence type="inferred from homology"/>
<accession>Q086W4</accession>
<keyword id="KW-0413">Isomerase</keyword>
<keyword id="KW-1185">Reference proteome</keyword>
<dbReference type="EC" id="5.3.1.6" evidence="1"/>
<dbReference type="EMBL" id="CP000447">
    <property type="protein sequence ID" value="ABI70701.1"/>
    <property type="molecule type" value="Genomic_DNA"/>
</dbReference>
<dbReference type="RefSeq" id="WP_011636324.1">
    <property type="nucleotide sequence ID" value="NC_008345.1"/>
</dbReference>
<dbReference type="SMR" id="Q086W4"/>
<dbReference type="STRING" id="318167.Sfri_0848"/>
<dbReference type="KEGG" id="sfr:Sfri_0848"/>
<dbReference type="eggNOG" id="COG0120">
    <property type="taxonomic scope" value="Bacteria"/>
</dbReference>
<dbReference type="HOGENOM" id="CLU_056590_1_1_6"/>
<dbReference type="OrthoDB" id="5870696at2"/>
<dbReference type="UniPathway" id="UPA00115">
    <property type="reaction ID" value="UER00412"/>
</dbReference>
<dbReference type="Proteomes" id="UP000000684">
    <property type="component" value="Chromosome"/>
</dbReference>
<dbReference type="GO" id="GO:0005829">
    <property type="term" value="C:cytosol"/>
    <property type="evidence" value="ECO:0007669"/>
    <property type="project" value="TreeGrafter"/>
</dbReference>
<dbReference type="GO" id="GO:0004751">
    <property type="term" value="F:ribose-5-phosphate isomerase activity"/>
    <property type="evidence" value="ECO:0007669"/>
    <property type="project" value="UniProtKB-UniRule"/>
</dbReference>
<dbReference type="GO" id="GO:0006014">
    <property type="term" value="P:D-ribose metabolic process"/>
    <property type="evidence" value="ECO:0007669"/>
    <property type="project" value="TreeGrafter"/>
</dbReference>
<dbReference type="GO" id="GO:0009052">
    <property type="term" value="P:pentose-phosphate shunt, non-oxidative branch"/>
    <property type="evidence" value="ECO:0007669"/>
    <property type="project" value="UniProtKB-UniRule"/>
</dbReference>
<dbReference type="CDD" id="cd01398">
    <property type="entry name" value="RPI_A"/>
    <property type="match status" value="1"/>
</dbReference>
<dbReference type="FunFam" id="3.30.70.260:FF:000004">
    <property type="entry name" value="Ribose-5-phosphate isomerase A"/>
    <property type="match status" value="1"/>
</dbReference>
<dbReference type="FunFam" id="3.40.50.1360:FF:000001">
    <property type="entry name" value="Ribose-5-phosphate isomerase A"/>
    <property type="match status" value="1"/>
</dbReference>
<dbReference type="Gene3D" id="3.30.70.260">
    <property type="match status" value="1"/>
</dbReference>
<dbReference type="Gene3D" id="3.40.50.1360">
    <property type="match status" value="1"/>
</dbReference>
<dbReference type="HAMAP" id="MF_00170">
    <property type="entry name" value="Rib_5P_isom_A"/>
    <property type="match status" value="1"/>
</dbReference>
<dbReference type="InterPro" id="IPR037171">
    <property type="entry name" value="NagB/RpiA_transferase-like"/>
</dbReference>
<dbReference type="InterPro" id="IPR020672">
    <property type="entry name" value="Ribose5P_isomerase_typA_subgr"/>
</dbReference>
<dbReference type="InterPro" id="IPR004788">
    <property type="entry name" value="Ribose5P_isomerase_type_A"/>
</dbReference>
<dbReference type="NCBIfam" id="NF001924">
    <property type="entry name" value="PRK00702.1"/>
    <property type="match status" value="1"/>
</dbReference>
<dbReference type="NCBIfam" id="TIGR00021">
    <property type="entry name" value="rpiA"/>
    <property type="match status" value="1"/>
</dbReference>
<dbReference type="PANTHER" id="PTHR11934">
    <property type="entry name" value="RIBOSE-5-PHOSPHATE ISOMERASE"/>
    <property type="match status" value="1"/>
</dbReference>
<dbReference type="PANTHER" id="PTHR11934:SF0">
    <property type="entry name" value="RIBOSE-5-PHOSPHATE ISOMERASE"/>
    <property type="match status" value="1"/>
</dbReference>
<dbReference type="Pfam" id="PF06026">
    <property type="entry name" value="Rib_5-P_isom_A"/>
    <property type="match status" value="1"/>
</dbReference>
<dbReference type="SUPFAM" id="SSF75445">
    <property type="entry name" value="D-ribose-5-phosphate isomerase (RpiA), lid domain"/>
    <property type="match status" value="1"/>
</dbReference>
<dbReference type="SUPFAM" id="SSF100950">
    <property type="entry name" value="NagB/RpiA/CoA transferase-like"/>
    <property type="match status" value="1"/>
</dbReference>
<sequence>MTQDEMKKAAGWAALQYVKKDTIVGVGTGSTVNHFIDALATMKDDIEGAVSSSEASTKKLIELGIEVFDLNSVDLIDVYVDGADEINDRMDMIKGGGAALTREKIVAAVAKRFICIVDNTKQVPILGEFPLPVEVIPMARSYVARELVKLGGDPVYRQGVITDNGNVILDVYNMKILDPKVMETKINAIVGVVTNGLFANRGADVLLVGTPDGVNTITL</sequence>
<comment type="function">
    <text evidence="1">Catalyzes the reversible conversion of ribose-5-phosphate to ribulose 5-phosphate.</text>
</comment>
<comment type="catalytic activity">
    <reaction evidence="1">
        <text>aldehydo-D-ribose 5-phosphate = D-ribulose 5-phosphate</text>
        <dbReference type="Rhea" id="RHEA:14657"/>
        <dbReference type="ChEBI" id="CHEBI:58121"/>
        <dbReference type="ChEBI" id="CHEBI:58273"/>
        <dbReference type="EC" id="5.3.1.6"/>
    </reaction>
</comment>
<comment type="pathway">
    <text evidence="1">Carbohydrate degradation; pentose phosphate pathway; D-ribose 5-phosphate from D-ribulose 5-phosphate (non-oxidative stage): step 1/1.</text>
</comment>
<comment type="subunit">
    <text evidence="1">Homodimer.</text>
</comment>
<comment type="similarity">
    <text evidence="1">Belongs to the ribose 5-phosphate isomerase family.</text>
</comment>
<evidence type="ECO:0000255" key="1">
    <source>
        <dbReference type="HAMAP-Rule" id="MF_00170"/>
    </source>
</evidence>
<gene>
    <name evidence="1" type="primary">rpiA</name>
    <name type="ordered locus">Sfri_0848</name>
</gene>
<name>RPIA_SHEFN</name>
<reference key="1">
    <citation type="submission" date="2006-08" db="EMBL/GenBank/DDBJ databases">
        <title>Complete sequence of Shewanella frigidimarina NCIMB 400.</title>
        <authorList>
            <consortium name="US DOE Joint Genome Institute"/>
            <person name="Copeland A."/>
            <person name="Lucas S."/>
            <person name="Lapidus A."/>
            <person name="Barry K."/>
            <person name="Detter J.C."/>
            <person name="Glavina del Rio T."/>
            <person name="Hammon N."/>
            <person name="Israni S."/>
            <person name="Dalin E."/>
            <person name="Tice H."/>
            <person name="Pitluck S."/>
            <person name="Fredrickson J.K."/>
            <person name="Kolker E."/>
            <person name="McCuel L.A."/>
            <person name="DiChristina T."/>
            <person name="Nealson K.H."/>
            <person name="Newman D."/>
            <person name="Tiedje J.M."/>
            <person name="Zhou J."/>
            <person name="Romine M.F."/>
            <person name="Culley D.E."/>
            <person name="Serres M."/>
            <person name="Chertkov O."/>
            <person name="Brettin T."/>
            <person name="Bruce D."/>
            <person name="Han C."/>
            <person name="Tapia R."/>
            <person name="Gilna P."/>
            <person name="Schmutz J."/>
            <person name="Larimer F."/>
            <person name="Land M."/>
            <person name="Hauser L."/>
            <person name="Kyrpides N."/>
            <person name="Mikhailova N."/>
            <person name="Richardson P."/>
        </authorList>
    </citation>
    <scope>NUCLEOTIDE SEQUENCE [LARGE SCALE GENOMIC DNA]</scope>
    <source>
        <strain>NCIMB 400</strain>
    </source>
</reference>
<feature type="chain" id="PRO_1000016990" description="Ribose-5-phosphate isomerase A">
    <location>
        <begin position="1"/>
        <end position="219"/>
    </location>
</feature>
<feature type="active site" description="Proton acceptor" evidence="1">
    <location>
        <position position="103"/>
    </location>
</feature>
<feature type="binding site" evidence="1">
    <location>
        <begin position="28"/>
        <end position="31"/>
    </location>
    <ligand>
        <name>substrate</name>
    </ligand>
</feature>
<feature type="binding site" evidence="1">
    <location>
        <begin position="81"/>
        <end position="84"/>
    </location>
    <ligand>
        <name>substrate</name>
    </ligand>
</feature>
<feature type="binding site" evidence="1">
    <location>
        <begin position="94"/>
        <end position="97"/>
    </location>
    <ligand>
        <name>substrate</name>
    </ligand>
</feature>
<feature type="binding site" evidence="1">
    <location>
        <position position="121"/>
    </location>
    <ligand>
        <name>substrate</name>
    </ligand>
</feature>
<protein>
    <recommendedName>
        <fullName evidence="1">Ribose-5-phosphate isomerase A</fullName>
        <ecNumber evidence="1">5.3.1.6</ecNumber>
    </recommendedName>
    <alternativeName>
        <fullName evidence="1">Phosphoriboisomerase A</fullName>
        <shortName evidence="1">PRI</shortName>
    </alternativeName>
</protein>
<organism>
    <name type="scientific">Shewanella frigidimarina (strain NCIMB 400)</name>
    <dbReference type="NCBI Taxonomy" id="318167"/>
    <lineage>
        <taxon>Bacteria</taxon>
        <taxon>Pseudomonadati</taxon>
        <taxon>Pseudomonadota</taxon>
        <taxon>Gammaproteobacteria</taxon>
        <taxon>Alteromonadales</taxon>
        <taxon>Shewanellaceae</taxon>
        <taxon>Shewanella</taxon>
    </lineage>
</organism>